<evidence type="ECO:0000255" key="1">
    <source>
        <dbReference type="HAMAP-Rule" id="MF_00171"/>
    </source>
</evidence>
<accession>Q8CWK3</accession>
<proteinExistence type="inferred from homology"/>
<sequence length="264" mass="29876">MRIALGIEYNGTDYFGWQRQREVASVQEKLEKALSKVANHPVEVQCAGRTDAGVHGTGQVVHFDTNVERKMVAWTMGANANLPKDIAVRWAKAVPDEFHARFSATARRYRYIIFNHALRPGILGSGVSHYHGELDEKKMHEAGQYLLGENDFTSFRAVQCQSLSPFRNMIHLNVTRHGHYVVIDIKANAFVHHMVRNITGSLIMVGRGEQDPEWIKWLLEAKDRKLAGPTAKAEGLYLVDVDYPEEFDLPRESIGPLFLPDNLN</sequence>
<protein>
    <recommendedName>
        <fullName evidence="1">tRNA pseudouridine synthase A</fullName>
        <ecNumber evidence="1">5.4.99.12</ecNumber>
    </recommendedName>
    <alternativeName>
        <fullName evidence="1">tRNA pseudouridine(38-40) synthase</fullName>
    </alternativeName>
    <alternativeName>
        <fullName evidence="1">tRNA pseudouridylate synthase I</fullName>
    </alternativeName>
    <alternativeName>
        <fullName evidence="1">tRNA-uridine isomerase I</fullName>
    </alternativeName>
</protein>
<name>TRUA_VIBVU</name>
<reference key="1">
    <citation type="submission" date="2002-12" db="EMBL/GenBank/DDBJ databases">
        <title>Complete genome sequence of Vibrio vulnificus CMCP6.</title>
        <authorList>
            <person name="Rhee J.H."/>
            <person name="Kim S.Y."/>
            <person name="Chung S.S."/>
            <person name="Kim J.J."/>
            <person name="Moon Y.H."/>
            <person name="Jeong H."/>
            <person name="Choy H.E."/>
        </authorList>
    </citation>
    <scope>NUCLEOTIDE SEQUENCE [LARGE SCALE GENOMIC DNA]</scope>
    <source>
        <strain>CMCP6</strain>
    </source>
</reference>
<feature type="chain" id="PRO_0000057486" description="tRNA pseudouridine synthase A">
    <location>
        <begin position="1"/>
        <end position="264"/>
    </location>
</feature>
<feature type="active site" description="Nucleophile" evidence="1">
    <location>
        <position position="51"/>
    </location>
</feature>
<feature type="binding site" evidence="1">
    <location>
        <position position="109"/>
    </location>
    <ligand>
        <name>substrate</name>
    </ligand>
</feature>
<keyword id="KW-0413">Isomerase</keyword>
<keyword id="KW-0819">tRNA processing</keyword>
<gene>
    <name evidence="1" type="primary">truA</name>
    <name type="ordered locus">VV1_1992</name>
</gene>
<dbReference type="EC" id="5.4.99.12" evidence="1"/>
<dbReference type="EMBL" id="AE016795">
    <property type="protein sequence ID" value="AAO10390.1"/>
    <property type="molecule type" value="Genomic_DNA"/>
</dbReference>
<dbReference type="RefSeq" id="WP_011079889.1">
    <property type="nucleotide sequence ID" value="NC_004459.3"/>
</dbReference>
<dbReference type="SMR" id="Q8CWK3"/>
<dbReference type="KEGG" id="vvu:VV1_1992"/>
<dbReference type="HOGENOM" id="CLU_014673_0_2_6"/>
<dbReference type="Proteomes" id="UP000002275">
    <property type="component" value="Chromosome 1"/>
</dbReference>
<dbReference type="GO" id="GO:0003723">
    <property type="term" value="F:RNA binding"/>
    <property type="evidence" value="ECO:0007669"/>
    <property type="project" value="InterPro"/>
</dbReference>
<dbReference type="GO" id="GO:0160147">
    <property type="term" value="F:tRNA pseudouridine(38-40) synthase activity"/>
    <property type="evidence" value="ECO:0007669"/>
    <property type="project" value="UniProtKB-EC"/>
</dbReference>
<dbReference type="GO" id="GO:0031119">
    <property type="term" value="P:tRNA pseudouridine synthesis"/>
    <property type="evidence" value="ECO:0007669"/>
    <property type="project" value="UniProtKB-UniRule"/>
</dbReference>
<dbReference type="CDD" id="cd02570">
    <property type="entry name" value="PseudoU_synth_EcTruA"/>
    <property type="match status" value="1"/>
</dbReference>
<dbReference type="FunFam" id="3.30.70.580:FF:000001">
    <property type="entry name" value="tRNA pseudouridine synthase A"/>
    <property type="match status" value="1"/>
</dbReference>
<dbReference type="FunFam" id="3.30.70.660:FF:000001">
    <property type="entry name" value="tRNA pseudouridine synthase A"/>
    <property type="match status" value="1"/>
</dbReference>
<dbReference type="Gene3D" id="3.30.70.660">
    <property type="entry name" value="Pseudouridine synthase I, catalytic domain, C-terminal subdomain"/>
    <property type="match status" value="1"/>
</dbReference>
<dbReference type="Gene3D" id="3.30.70.580">
    <property type="entry name" value="Pseudouridine synthase I, catalytic domain, N-terminal subdomain"/>
    <property type="match status" value="1"/>
</dbReference>
<dbReference type="HAMAP" id="MF_00171">
    <property type="entry name" value="TruA"/>
    <property type="match status" value="1"/>
</dbReference>
<dbReference type="InterPro" id="IPR020103">
    <property type="entry name" value="PsdUridine_synth_cat_dom_sf"/>
</dbReference>
<dbReference type="InterPro" id="IPR001406">
    <property type="entry name" value="PsdUridine_synth_TruA"/>
</dbReference>
<dbReference type="InterPro" id="IPR020097">
    <property type="entry name" value="PsdUridine_synth_TruA_a/b_dom"/>
</dbReference>
<dbReference type="InterPro" id="IPR020095">
    <property type="entry name" value="PsdUridine_synth_TruA_C"/>
</dbReference>
<dbReference type="InterPro" id="IPR020094">
    <property type="entry name" value="TruA/RsuA/RluB/E/F_N"/>
</dbReference>
<dbReference type="NCBIfam" id="TIGR00071">
    <property type="entry name" value="hisT_truA"/>
    <property type="match status" value="1"/>
</dbReference>
<dbReference type="PANTHER" id="PTHR11142">
    <property type="entry name" value="PSEUDOURIDYLATE SYNTHASE"/>
    <property type="match status" value="1"/>
</dbReference>
<dbReference type="PANTHER" id="PTHR11142:SF0">
    <property type="entry name" value="TRNA PSEUDOURIDINE SYNTHASE-LIKE 1"/>
    <property type="match status" value="1"/>
</dbReference>
<dbReference type="Pfam" id="PF01416">
    <property type="entry name" value="PseudoU_synth_1"/>
    <property type="match status" value="2"/>
</dbReference>
<dbReference type="PIRSF" id="PIRSF001430">
    <property type="entry name" value="tRNA_psdUrid_synth"/>
    <property type="match status" value="1"/>
</dbReference>
<dbReference type="SUPFAM" id="SSF55120">
    <property type="entry name" value="Pseudouridine synthase"/>
    <property type="match status" value="1"/>
</dbReference>
<organism>
    <name type="scientific">Vibrio vulnificus (strain CMCP6)</name>
    <dbReference type="NCBI Taxonomy" id="216895"/>
    <lineage>
        <taxon>Bacteria</taxon>
        <taxon>Pseudomonadati</taxon>
        <taxon>Pseudomonadota</taxon>
        <taxon>Gammaproteobacteria</taxon>
        <taxon>Vibrionales</taxon>
        <taxon>Vibrionaceae</taxon>
        <taxon>Vibrio</taxon>
    </lineage>
</organism>
<comment type="function">
    <text evidence="1">Formation of pseudouridine at positions 38, 39 and 40 in the anticodon stem and loop of transfer RNAs.</text>
</comment>
<comment type="catalytic activity">
    <reaction evidence="1">
        <text>uridine(38/39/40) in tRNA = pseudouridine(38/39/40) in tRNA</text>
        <dbReference type="Rhea" id="RHEA:22376"/>
        <dbReference type="Rhea" id="RHEA-COMP:10085"/>
        <dbReference type="Rhea" id="RHEA-COMP:10087"/>
        <dbReference type="ChEBI" id="CHEBI:65314"/>
        <dbReference type="ChEBI" id="CHEBI:65315"/>
        <dbReference type="EC" id="5.4.99.12"/>
    </reaction>
</comment>
<comment type="subunit">
    <text evidence="1">Homodimer.</text>
</comment>
<comment type="similarity">
    <text evidence="1">Belongs to the tRNA pseudouridine synthase TruA family.</text>
</comment>